<organism>
    <name type="scientific">Paenarthrobacter aurescens (strain TC1)</name>
    <dbReference type="NCBI Taxonomy" id="290340"/>
    <lineage>
        <taxon>Bacteria</taxon>
        <taxon>Bacillati</taxon>
        <taxon>Actinomycetota</taxon>
        <taxon>Actinomycetes</taxon>
        <taxon>Micrococcales</taxon>
        <taxon>Micrococcaceae</taxon>
        <taxon>Paenarthrobacter</taxon>
    </lineage>
</organism>
<reference key="1">
    <citation type="journal article" date="2006" name="PLoS Genet.">
        <title>Secrets of soil survival revealed by the genome sequence of Arthrobacter aurescens TC1.</title>
        <authorList>
            <person name="Mongodin E.F."/>
            <person name="Shapir N."/>
            <person name="Daugherty S.C."/>
            <person name="DeBoy R.T."/>
            <person name="Emerson J.B."/>
            <person name="Shvartzbeyn A."/>
            <person name="Radune D."/>
            <person name="Vamathevan J."/>
            <person name="Riggs F."/>
            <person name="Grinberg V."/>
            <person name="Khouri H.M."/>
            <person name="Wackett L.P."/>
            <person name="Nelson K.E."/>
            <person name="Sadowsky M.J."/>
        </authorList>
    </citation>
    <scope>NUCLEOTIDE SEQUENCE [LARGE SCALE GENOMIC DNA]</scope>
    <source>
        <strain>TC1</strain>
    </source>
</reference>
<proteinExistence type="inferred from homology"/>
<protein>
    <recommendedName>
        <fullName evidence="1">ATP phosphoribosyltransferase</fullName>
        <shortName evidence="1">ATP-PRT</shortName>
        <shortName evidence="1">ATP-PRTase</shortName>
        <ecNumber evidence="1">2.4.2.17</ecNumber>
    </recommendedName>
</protein>
<sequence>MLRVAVPNKGSLSEAASAMLSEAGYRQRRDTRELVMVDPDNDIEFFFLRPRDIAVYVGQGTLDVGITGRDLLLDAKVEAEELLPLGFAPSTFRFAGPVGDFSGVEQLEGKRLATSYDGLLRDYLAERGVNAKVVRLDGAVESSVRLGVADAIADVVETGNTLKAAGMEIFGDPILKSEAVLIRRSGSGGAANGTAKEIEILIRRLQGVLVARQYVLMDYDIRKDLVEDAAALTPGLESPTVSPLRDSEWVAVRSMVPKKETNRIMDELYDLGARAILVSSIHACRI</sequence>
<keyword id="KW-0028">Amino-acid biosynthesis</keyword>
<keyword id="KW-0067">ATP-binding</keyword>
<keyword id="KW-0963">Cytoplasm</keyword>
<keyword id="KW-0328">Glycosyltransferase</keyword>
<keyword id="KW-0368">Histidine biosynthesis</keyword>
<keyword id="KW-0460">Magnesium</keyword>
<keyword id="KW-0479">Metal-binding</keyword>
<keyword id="KW-0547">Nucleotide-binding</keyword>
<keyword id="KW-0808">Transferase</keyword>
<evidence type="ECO:0000255" key="1">
    <source>
        <dbReference type="HAMAP-Rule" id="MF_00079"/>
    </source>
</evidence>
<gene>
    <name evidence="1" type="primary">hisG</name>
    <name type="ordered locus">AAur_1831</name>
</gene>
<dbReference type="EC" id="2.4.2.17" evidence="1"/>
<dbReference type="EMBL" id="CP000474">
    <property type="protein sequence ID" value="ABM08494.1"/>
    <property type="molecule type" value="Genomic_DNA"/>
</dbReference>
<dbReference type="RefSeq" id="WP_011774526.1">
    <property type="nucleotide sequence ID" value="NC_008711.1"/>
</dbReference>
<dbReference type="SMR" id="A1R5S0"/>
<dbReference type="STRING" id="290340.AAur_1831"/>
<dbReference type="KEGG" id="aau:AAur_1831"/>
<dbReference type="eggNOG" id="COG0040">
    <property type="taxonomic scope" value="Bacteria"/>
</dbReference>
<dbReference type="HOGENOM" id="CLU_038115_1_1_11"/>
<dbReference type="OrthoDB" id="9801867at2"/>
<dbReference type="UniPathway" id="UPA00031">
    <property type="reaction ID" value="UER00006"/>
</dbReference>
<dbReference type="Proteomes" id="UP000000637">
    <property type="component" value="Chromosome"/>
</dbReference>
<dbReference type="GO" id="GO:0005737">
    <property type="term" value="C:cytoplasm"/>
    <property type="evidence" value="ECO:0007669"/>
    <property type="project" value="UniProtKB-SubCell"/>
</dbReference>
<dbReference type="GO" id="GO:0005524">
    <property type="term" value="F:ATP binding"/>
    <property type="evidence" value="ECO:0007669"/>
    <property type="project" value="UniProtKB-KW"/>
</dbReference>
<dbReference type="GO" id="GO:0003879">
    <property type="term" value="F:ATP phosphoribosyltransferase activity"/>
    <property type="evidence" value="ECO:0007669"/>
    <property type="project" value="UniProtKB-UniRule"/>
</dbReference>
<dbReference type="GO" id="GO:0000287">
    <property type="term" value="F:magnesium ion binding"/>
    <property type="evidence" value="ECO:0007669"/>
    <property type="project" value="UniProtKB-UniRule"/>
</dbReference>
<dbReference type="GO" id="GO:0000105">
    <property type="term" value="P:L-histidine biosynthetic process"/>
    <property type="evidence" value="ECO:0007669"/>
    <property type="project" value="UniProtKB-UniRule"/>
</dbReference>
<dbReference type="CDD" id="cd13591">
    <property type="entry name" value="PBP2_HisGL1"/>
    <property type="match status" value="1"/>
</dbReference>
<dbReference type="FunFam" id="3.30.70.120:FF:000003">
    <property type="entry name" value="ATP phosphoribosyltransferase"/>
    <property type="match status" value="1"/>
</dbReference>
<dbReference type="Gene3D" id="3.30.70.120">
    <property type="match status" value="1"/>
</dbReference>
<dbReference type="Gene3D" id="3.40.190.10">
    <property type="entry name" value="Periplasmic binding protein-like II"/>
    <property type="match status" value="2"/>
</dbReference>
<dbReference type="HAMAP" id="MF_00079">
    <property type="entry name" value="HisG_Long"/>
    <property type="match status" value="1"/>
</dbReference>
<dbReference type="InterPro" id="IPR020621">
    <property type="entry name" value="ATP-PRT_HisG_long"/>
</dbReference>
<dbReference type="InterPro" id="IPR013820">
    <property type="entry name" value="ATP_PRibTrfase_cat"/>
</dbReference>
<dbReference type="InterPro" id="IPR018198">
    <property type="entry name" value="ATP_PRibTrfase_CS"/>
</dbReference>
<dbReference type="InterPro" id="IPR001348">
    <property type="entry name" value="ATP_PRibTrfase_HisG"/>
</dbReference>
<dbReference type="InterPro" id="IPR013115">
    <property type="entry name" value="HisG_C"/>
</dbReference>
<dbReference type="InterPro" id="IPR011322">
    <property type="entry name" value="N-reg_PII-like_a/b"/>
</dbReference>
<dbReference type="InterPro" id="IPR015867">
    <property type="entry name" value="N-reg_PII/ATP_PRibTrfase_C"/>
</dbReference>
<dbReference type="NCBIfam" id="TIGR00070">
    <property type="entry name" value="hisG"/>
    <property type="match status" value="1"/>
</dbReference>
<dbReference type="NCBIfam" id="TIGR03455">
    <property type="entry name" value="HisG_C-term"/>
    <property type="match status" value="1"/>
</dbReference>
<dbReference type="PANTHER" id="PTHR21403:SF8">
    <property type="entry name" value="ATP PHOSPHORIBOSYLTRANSFERASE"/>
    <property type="match status" value="1"/>
</dbReference>
<dbReference type="PANTHER" id="PTHR21403">
    <property type="entry name" value="ATP PHOSPHORIBOSYLTRANSFERASE ATP-PRTASE"/>
    <property type="match status" value="1"/>
</dbReference>
<dbReference type="Pfam" id="PF01634">
    <property type="entry name" value="HisG"/>
    <property type="match status" value="1"/>
</dbReference>
<dbReference type="Pfam" id="PF08029">
    <property type="entry name" value="HisG_C"/>
    <property type="match status" value="1"/>
</dbReference>
<dbReference type="SUPFAM" id="SSF54913">
    <property type="entry name" value="GlnB-like"/>
    <property type="match status" value="1"/>
</dbReference>
<dbReference type="SUPFAM" id="SSF53850">
    <property type="entry name" value="Periplasmic binding protein-like II"/>
    <property type="match status" value="1"/>
</dbReference>
<dbReference type="PROSITE" id="PS01316">
    <property type="entry name" value="ATP_P_PHORIBOSYLTR"/>
    <property type="match status" value="1"/>
</dbReference>
<comment type="function">
    <text evidence="1">Catalyzes the condensation of ATP and 5-phosphoribose 1-diphosphate to form N'-(5'-phosphoribosyl)-ATP (PR-ATP). Has a crucial role in the pathway because the rate of histidine biosynthesis seems to be controlled primarily by regulation of HisG enzymatic activity.</text>
</comment>
<comment type="catalytic activity">
    <reaction evidence="1">
        <text>1-(5-phospho-beta-D-ribosyl)-ATP + diphosphate = 5-phospho-alpha-D-ribose 1-diphosphate + ATP</text>
        <dbReference type="Rhea" id="RHEA:18473"/>
        <dbReference type="ChEBI" id="CHEBI:30616"/>
        <dbReference type="ChEBI" id="CHEBI:33019"/>
        <dbReference type="ChEBI" id="CHEBI:58017"/>
        <dbReference type="ChEBI" id="CHEBI:73183"/>
        <dbReference type="EC" id="2.4.2.17"/>
    </reaction>
</comment>
<comment type="cofactor">
    <cofactor evidence="1">
        <name>Mg(2+)</name>
        <dbReference type="ChEBI" id="CHEBI:18420"/>
    </cofactor>
</comment>
<comment type="activity regulation">
    <text evidence="1">Feedback inhibited by histidine.</text>
</comment>
<comment type="pathway">
    <text evidence="1">Amino-acid biosynthesis; L-histidine biosynthesis; L-histidine from 5-phospho-alpha-D-ribose 1-diphosphate: step 1/9.</text>
</comment>
<comment type="subcellular location">
    <subcellularLocation>
        <location evidence="1">Cytoplasm</location>
    </subcellularLocation>
</comment>
<comment type="similarity">
    <text evidence="1">Belongs to the ATP phosphoribosyltransferase family. Long subfamily.</text>
</comment>
<feature type="chain" id="PRO_1000004440" description="ATP phosphoribosyltransferase">
    <location>
        <begin position="1"/>
        <end position="286"/>
    </location>
</feature>
<accession>A1R5S0</accession>
<name>HIS1_PAEAT</name>